<accession>B4STR2</accession>
<proteinExistence type="inferred from homology"/>
<feature type="chain" id="PRO_1000187350" description="Methylthioribulose-1-phosphate dehydratase">
    <location>
        <begin position="1"/>
        <end position="213"/>
    </location>
</feature>
<feature type="binding site" evidence="1">
    <location>
        <position position="104"/>
    </location>
    <ligand>
        <name>Zn(2+)</name>
        <dbReference type="ChEBI" id="CHEBI:29105"/>
    </ligand>
</feature>
<feature type="binding site" evidence="1">
    <location>
        <position position="106"/>
    </location>
    <ligand>
        <name>Zn(2+)</name>
        <dbReference type="ChEBI" id="CHEBI:29105"/>
    </ligand>
</feature>
<evidence type="ECO:0000255" key="1">
    <source>
        <dbReference type="HAMAP-Rule" id="MF_01677"/>
    </source>
</evidence>
<comment type="function">
    <text evidence="1">Catalyzes the dehydration of methylthioribulose-1-phosphate (MTRu-1-P) into 2,3-diketo-5-methylthiopentyl-1-phosphate (DK-MTP-1-P).</text>
</comment>
<comment type="catalytic activity">
    <reaction evidence="1">
        <text>5-(methylsulfanyl)-D-ribulose 1-phosphate = 5-methylsulfanyl-2,3-dioxopentyl phosphate + H2O</text>
        <dbReference type="Rhea" id="RHEA:15549"/>
        <dbReference type="ChEBI" id="CHEBI:15377"/>
        <dbReference type="ChEBI" id="CHEBI:58548"/>
        <dbReference type="ChEBI" id="CHEBI:58828"/>
        <dbReference type="EC" id="4.2.1.109"/>
    </reaction>
</comment>
<comment type="cofactor">
    <cofactor evidence="1">
        <name>Zn(2+)</name>
        <dbReference type="ChEBI" id="CHEBI:29105"/>
    </cofactor>
    <text evidence="1">Binds 1 zinc ion per subunit.</text>
</comment>
<comment type="pathway">
    <text evidence="1">Amino-acid biosynthesis; L-methionine biosynthesis via salvage pathway; L-methionine from S-methyl-5-thio-alpha-D-ribose 1-phosphate: step 2/6.</text>
</comment>
<comment type="similarity">
    <text evidence="1">Belongs to the aldolase class II family. MtnB subfamily.</text>
</comment>
<dbReference type="EC" id="4.2.1.109" evidence="1"/>
<dbReference type="EMBL" id="CP001111">
    <property type="protein sequence ID" value="ACF51486.1"/>
    <property type="molecule type" value="Genomic_DNA"/>
</dbReference>
<dbReference type="RefSeq" id="WP_012510904.1">
    <property type="nucleotide sequence ID" value="NC_011071.1"/>
</dbReference>
<dbReference type="SMR" id="B4STR2"/>
<dbReference type="STRING" id="391008.Smal_1782"/>
<dbReference type="KEGG" id="smt:Smal_1782"/>
<dbReference type="eggNOG" id="COG0235">
    <property type="taxonomic scope" value="Bacteria"/>
</dbReference>
<dbReference type="HOGENOM" id="CLU_006033_4_1_6"/>
<dbReference type="OrthoDB" id="9805559at2"/>
<dbReference type="UniPathway" id="UPA00904">
    <property type="reaction ID" value="UER00875"/>
</dbReference>
<dbReference type="Proteomes" id="UP000001867">
    <property type="component" value="Chromosome"/>
</dbReference>
<dbReference type="GO" id="GO:0005737">
    <property type="term" value="C:cytoplasm"/>
    <property type="evidence" value="ECO:0007669"/>
    <property type="project" value="InterPro"/>
</dbReference>
<dbReference type="GO" id="GO:0046570">
    <property type="term" value="F:methylthioribulose 1-phosphate dehydratase activity"/>
    <property type="evidence" value="ECO:0007669"/>
    <property type="project" value="UniProtKB-UniRule"/>
</dbReference>
<dbReference type="GO" id="GO:0008270">
    <property type="term" value="F:zinc ion binding"/>
    <property type="evidence" value="ECO:0007669"/>
    <property type="project" value="UniProtKB-UniRule"/>
</dbReference>
<dbReference type="GO" id="GO:0019509">
    <property type="term" value="P:L-methionine salvage from methylthioadenosine"/>
    <property type="evidence" value="ECO:0007669"/>
    <property type="project" value="UniProtKB-UniRule"/>
</dbReference>
<dbReference type="GO" id="GO:0005996">
    <property type="term" value="P:monosaccharide metabolic process"/>
    <property type="evidence" value="ECO:0007669"/>
    <property type="project" value="UniProtKB-ARBA"/>
</dbReference>
<dbReference type="FunFam" id="3.40.225.10:FF:000007">
    <property type="entry name" value="Methylthioribulose-1-phosphate dehydratase"/>
    <property type="match status" value="1"/>
</dbReference>
<dbReference type="Gene3D" id="3.40.225.10">
    <property type="entry name" value="Class II aldolase/adducin N-terminal domain"/>
    <property type="match status" value="1"/>
</dbReference>
<dbReference type="HAMAP" id="MF_01677">
    <property type="entry name" value="Salvage_MtnB"/>
    <property type="match status" value="1"/>
</dbReference>
<dbReference type="InterPro" id="IPR001303">
    <property type="entry name" value="Aldolase_II/adducin_N"/>
</dbReference>
<dbReference type="InterPro" id="IPR036409">
    <property type="entry name" value="Aldolase_II/adducin_N_sf"/>
</dbReference>
<dbReference type="InterPro" id="IPR017714">
    <property type="entry name" value="MethylthioRu-1-P_deHdtase_MtnB"/>
</dbReference>
<dbReference type="NCBIfam" id="NF006672">
    <property type="entry name" value="PRK09220.1"/>
    <property type="match status" value="1"/>
</dbReference>
<dbReference type="NCBIfam" id="TIGR03328">
    <property type="entry name" value="salvage_mtnB"/>
    <property type="match status" value="1"/>
</dbReference>
<dbReference type="PANTHER" id="PTHR10640">
    <property type="entry name" value="METHYLTHIORIBULOSE-1-PHOSPHATE DEHYDRATASE"/>
    <property type="match status" value="1"/>
</dbReference>
<dbReference type="PANTHER" id="PTHR10640:SF7">
    <property type="entry name" value="METHYLTHIORIBULOSE-1-PHOSPHATE DEHYDRATASE"/>
    <property type="match status" value="1"/>
</dbReference>
<dbReference type="Pfam" id="PF00596">
    <property type="entry name" value="Aldolase_II"/>
    <property type="match status" value="1"/>
</dbReference>
<dbReference type="SMART" id="SM01007">
    <property type="entry name" value="Aldolase_II"/>
    <property type="match status" value="1"/>
</dbReference>
<dbReference type="SUPFAM" id="SSF53639">
    <property type="entry name" value="AraD/HMP-PK domain-like"/>
    <property type="match status" value="1"/>
</dbReference>
<keyword id="KW-0028">Amino-acid biosynthesis</keyword>
<keyword id="KW-0456">Lyase</keyword>
<keyword id="KW-0479">Metal-binding</keyword>
<keyword id="KW-0486">Methionine biosynthesis</keyword>
<keyword id="KW-0862">Zinc</keyword>
<protein>
    <recommendedName>
        <fullName evidence="1">Methylthioribulose-1-phosphate dehydratase</fullName>
        <shortName evidence="1">MTRu-1-P dehydratase</shortName>
        <ecNumber evidence="1">4.2.1.109</ecNumber>
    </recommendedName>
</protein>
<name>MTNB_STRM5</name>
<sequence>MNAPTFPYDTARLSELAQLLIDNVRELAQAGWTPATSSNFSHRLDDRHAAITVSGKDKGRLIEDDIMVVDFDGQAVGRPLRPSAETLLHTQLYRRFPEIGCVLHTHSPVQTIASRLYAPQGHIRVEGYELLKAFAGNSTHEMAIDIPVFANTQDMNVLSKQVDDLLDRQNLWGYLIDGHGLYAWGRDMADARRHLEAFEFLLHCELELRKLRG</sequence>
<gene>
    <name evidence="1" type="primary">mtnB</name>
    <name type="ordered locus">Smal_1782</name>
</gene>
<reference key="1">
    <citation type="submission" date="2008-06" db="EMBL/GenBank/DDBJ databases">
        <title>Complete sequence of Stenotrophomonas maltophilia R551-3.</title>
        <authorList>
            <consortium name="US DOE Joint Genome Institute"/>
            <person name="Lucas S."/>
            <person name="Copeland A."/>
            <person name="Lapidus A."/>
            <person name="Glavina del Rio T."/>
            <person name="Dalin E."/>
            <person name="Tice H."/>
            <person name="Pitluck S."/>
            <person name="Chain P."/>
            <person name="Malfatti S."/>
            <person name="Shin M."/>
            <person name="Vergez L."/>
            <person name="Lang D."/>
            <person name="Schmutz J."/>
            <person name="Larimer F."/>
            <person name="Land M."/>
            <person name="Hauser L."/>
            <person name="Kyrpides N."/>
            <person name="Mikhailova N."/>
            <person name="Taghavi S."/>
            <person name="Monchy S."/>
            <person name="Newman L."/>
            <person name="Vangronsveld J."/>
            <person name="van der Lelie D."/>
            <person name="Richardson P."/>
        </authorList>
    </citation>
    <scope>NUCLEOTIDE SEQUENCE [LARGE SCALE GENOMIC DNA]</scope>
    <source>
        <strain>R551-3</strain>
    </source>
</reference>
<organism>
    <name type="scientific">Stenotrophomonas maltophilia (strain R551-3)</name>
    <dbReference type="NCBI Taxonomy" id="391008"/>
    <lineage>
        <taxon>Bacteria</taxon>
        <taxon>Pseudomonadati</taxon>
        <taxon>Pseudomonadota</taxon>
        <taxon>Gammaproteobacteria</taxon>
        <taxon>Lysobacterales</taxon>
        <taxon>Lysobacteraceae</taxon>
        <taxon>Stenotrophomonas</taxon>
        <taxon>Stenotrophomonas maltophilia group</taxon>
    </lineage>
</organism>